<gene>
    <name type="primary">Csmd3</name>
    <name type="synonym">Kiaa1894</name>
</gene>
<organism>
    <name type="scientific">Mus musculus</name>
    <name type="common">Mouse</name>
    <dbReference type="NCBI Taxonomy" id="10090"/>
    <lineage>
        <taxon>Eukaryota</taxon>
        <taxon>Metazoa</taxon>
        <taxon>Chordata</taxon>
        <taxon>Craniata</taxon>
        <taxon>Vertebrata</taxon>
        <taxon>Euteleostomi</taxon>
        <taxon>Mammalia</taxon>
        <taxon>Eutheria</taxon>
        <taxon>Euarchontoglires</taxon>
        <taxon>Glires</taxon>
        <taxon>Rodentia</taxon>
        <taxon>Myomorpha</taxon>
        <taxon>Muroidea</taxon>
        <taxon>Muridae</taxon>
        <taxon>Murinae</taxon>
        <taxon>Mus</taxon>
        <taxon>Mus</taxon>
    </lineage>
</organism>
<dbReference type="EMBL" id="AK140264">
    <property type="protein sequence ID" value="BAE24305.1"/>
    <property type="molecule type" value="mRNA"/>
</dbReference>
<dbReference type="EMBL" id="AK015672">
    <property type="protein sequence ID" value="BAB29924.1"/>
    <property type="molecule type" value="mRNA"/>
</dbReference>
<dbReference type="EMBL" id="AC099596">
    <property type="status" value="NOT_ANNOTATED_CDS"/>
    <property type="molecule type" value="Genomic_DNA"/>
</dbReference>
<dbReference type="EMBL" id="AC099600">
    <property type="status" value="NOT_ANNOTATED_CDS"/>
    <property type="molecule type" value="Genomic_DNA"/>
</dbReference>
<dbReference type="EMBL" id="AC099711">
    <property type="status" value="NOT_ANNOTATED_CDS"/>
    <property type="molecule type" value="Genomic_DNA"/>
</dbReference>
<dbReference type="EMBL" id="AC101706">
    <property type="status" value="NOT_ANNOTATED_CDS"/>
    <property type="molecule type" value="Genomic_DNA"/>
</dbReference>
<dbReference type="EMBL" id="AC101771">
    <property type="status" value="NOT_ANNOTATED_CDS"/>
    <property type="molecule type" value="Genomic_DNA"/>
</dbReference>
<dbReference type="EMBL" id="AC129189">
    <property type="status" value="NOT_ANNOTATED_CDS"/>
    <property type="molecule type" value="Genomic_DNA"/>
</dbReference>
<dbReference type="EMBL" id="AC130669">
    <property type="status" value="NOT_ANNOTATED_CDS"/>
    <property type="molecule type" value="Genomic_DNA"/>
</dbReference>
<dbReference type="EMBL" id="AC137905">
    <property type="status" value="NOT_ANNOTATED_CDS"/>
    <property type="molecule type" value="Genomic_DNA"/>
</dbReference>
<dbReference type="EMBL" id="AC154881">
    <property type="status" value="NOT_ANNOTATED_CDS"/>
    <property type="molecule type" value="Genomic_DNA"/>
</dbReference>
<dbReference type="EMBL" id="AC157584">
    <property type="status" value="NOT_ANNOTATED_CDS"/>
    <property type="molecule type" value="Genomic_DNA"/>
</dbReference>
<dbReference type="EMBL" id="AC158907">
    <property type="status" value="NOT_ANNOTATED_CDS"/>
    <property type="molecule type" value="Genomic_DNA"/>
</dbReference>
<dbReference type="EMBL" id="AK122567">
    <property type="protein sequence ID" value="BAC65849.1"/>
    <property type="molecule type" value="mRNA"/>
</dbReference>
<dbReference type="CCDS" id="CCDS49602.1">
    <molecule id="Q80T79-3"/>
</dbReference>
<dbReference type="RefSeq" id="NP_001074860.2">
    <molecule id="Q80T79-3"/>
    <property type="nucleotide sequence ID" value="NM_001081391.2"/>
</dbReference>
<dbReference type="RefSeq" id="XP_011243913.1">
    <molecule id="Q80T79-1"/>
    <property type="nucleotide sequence ID" value="XM_011245611.4"/>
</dbReference>
<dbReference type="SMR" id="Q80T79"/>
<dbReference type="BioGRID" id="232083">
    <property type="interactions" value="1"/>
</dbReference>
<dbReference type="FunCoup" id="Q80T79">
    <property type="interactions" value="1089"/>
</dbReference>
<dbReference type="STRING" id="10090.ENSMUSP00000098235"/>
<dbReference type="GlyConnect" id="2242">
    <property type="glycosylation" value="6 N-Linked glycans (5 sites)"/>
</dbReference>
<dbReference type="GlyCosmos" id="Q80T79">
    <property type="glycosylation" value="22 sites, 5 glycans"/>
</dbReference>
<dbReference type="GlyGen" id="Q80T79">
    <property type="glycosylation" value="30 sites, 13 N-linked glycans (12 sites), 1 O-linked glycan (2 sites)"/>
</dbReference>
<dbReference type="iPTMnet" id="Q80T79"/>
<dbReference type="PhosphoSitePlus" id="Q80T79"/>
<dbReference type="PaxDb" id="10090-ENSMUSP00000098235"/>
<dbReference type="ProteomicsDB" id="285326">
    <molecule id="Q80T79-3"/>
</dbReference>
<dbReference type="ProteomicsDB" id="285327">
    <molecule id="Q80T79-1"/>
</dbReference>
<dbReference type="ProteomicsDB" id="285328">
    <molecule id="Q80T79-2"/>
</dbReference>
<dbReference type="Antibodypedia" id="26636">
    <property type="antibodies" value="107 antibodies from 22 providers"/>
</dbReference>
<dbReference type="DNASU" id="239420"/>
<dbReference type="Ensembl" id="ENSMUST00000100670.10">
    <molecule id="Q80T79-3"/>
    <property type="protein sequence ID" value="ENSMUSP00000098235.4"/>
    <property type="gene ID" value="ENSMUSG00000022311.16"/>
</dbReference>
<dbReference type="Ensembl" id="ENSMUST00000162830.8">
    <molecule id="Q80T79-3"/>
    <property type="protein sequence ID" value="ENSMUSP00000124775.2"/>
    <property type="gene ID" value="ENSMUSG00000022311.16"/>
</dbReference>
<dbReference type="GeneID" id="239420"/>
<dbReference type="KEGG" id="mmu:239420"/>
<dbReference type="UCSC" id="uc007vqt.1">
    <molecule id="Q80T79-2"/>
    <property type="organism name" value="mouse"/>
</dbReference>
<dbReference type="UCSC" id="uc007vqu.2">
    <molecule id="Q80T79-3"/>
    <property type="organism name" value="mouse"/>
</dbReference>
<dbReference type="AGR" id="MGI:2386403"/>
<dbReference type="CTD" id="114788"/>
<dbReference type="MGI" id="MGI:2386403">
    <property type="gene designation" value="Csmd3"/>
</dbReference>
<dbReference type="VEuPathDB" id="HostDB:ENSMUSG00000022311"/>
<dbReference type="eggNOG" id="KOG4297">
    <property type="taxonomic scope" value="Eukaryota"/>
</dbReference>
<dbReference type="GeneTree" id="ENSGT00940000155549"/>
<dbReference type="InParanoid" id="Q80T79"/>
<dbReference type="OMA" id="AVNTNKX"/>
<dbReference type="OrthoDB" id="5804959at2759"/>
<dbReference type="PhylomeDB" id="Q80T79"/>
<dbReference type="TreeFam" id="TF316872"/>
<dbReference type="BioGRID-ORCS" id="239420">
    <property type="hits" value="1 hit in 76 CRISPR screens"/>
</dbReference>
<dbReference type="ChiTaRS" id="Csmd3">
    <property type="organism name" value="mouse"/>
</dbReference>
<dbReference type="PRO" id="PR:Q80T79"/>
<dbReference type="Proteomes" id="UP000000589">
    <property type="component" value="Chromosome 15"/>
</dbReference>
<dbReference type="RNAct" id="Q80T79">
    <property type="molecule type" value="protein"/>
</dbReference>
<dbReference type="Bgee" id="ENSMUSG00000022311">
    <property type="expression patterns" value="Expressed in lumbar subsegment of spinal cord and 106 other cell types or tissues"/>
</dbReference>
<dbReference type="ExpressionAtlas" id="Q80T79">
    <property type="expression patterns" value="baseline and differential"/>
</dbReference>
<dbReference type="GO" id="GO:0005886">
    <property type="term" value="C:plasma membrane"/>
    <property type="evidence" value="ECO:0000314"/>
    <property type="project" value="UniProtKB"/>
</dbReference>
<dbReference type="GO" id="GO:0050773">
    <property type="term" value="P:regulation of dendrite development"/>
    <property type="evidence" value="ECO:0000315"/>
    <property type="project" value="UniProtKB"/>
</dbReference>
<dbReference type="CDD" id="cd00033">
    <property type="entry name" value="CCP"/>
    <property type="match status" value="28"/>
</dbReference>
<dbReference type="CDD" id="cd00041">
    <property type="entry name" value="CUB"/>
    <property type="match status" value="14"/>
</dbReference>
<dbReference type="FunFam" id="2.10.70.10:FF:000011">
    <property type="entry name" value="CUB and sushi domain-containing protein 3 isoform A"/>
    <property type="match status" value="6"/>
</dbReference>
<dbReference type="FunFam" id="2.10.70.10:FF:000066">
    <property type="entry name" value="CUB and sushi domain-containing protein 3 isoform X1"/>
    <property type="match status" value="1"/>
</dbReference>
<dbReference type="FunFam" id="2.60.120.290:FF:000001">
    <property type="entry name" value="CUB and sushi domain-containing protein 3 isoform X1"/>
    <property type="match status" value="14"/>
</dbReference>
<dbReference type="FunFam" id="2.10.70.10:FF:000002">
    <property type="entry name" value="CUB and Sushi multiple domains 3"/>
    <property type="match status" value="11"/>
</dbReference>
<dbReference type="FunFam" id="2.10.70.10:FF:000047">
    <property type="entry name" value="CUB and Sushi multiple domains 3"/>
    <property type="match status" value="1"/>
</dbReference>
<dbReference type="FunFam" id="2.10.70.10:FF:000053">
    <property type="entry name" value="CUB and Sushi multiple domains 3"/>
    <property type="match status" value="1"/>
</dbReference>
<dbReference type="FunFam" id="2.10.70.10:FF:000062">
    <property type="entry name" value="CUB and Sushi multiple domains 3"/>
    <property type="match status" value="1"/>
</dbReference>
<dbReference type="FunFam" id="2.10.70.10:FF:000067">
    <property type="entry name" value="CUB and Sushi multiple domains 3"/>
    <property type="match status" value="1"/>
</dbReference>
<dbReference type="FunFam" id="2.10.70.10:FF:000074">
    <property type="entry name" value="CUB and Sushi multiple domains 3"/>
    <property type="match status" value="1"/>
</dbReference>
<dbReference type="Gene3D" id="2.10.70.10">
    <property type="entry name" value="Complement Module, domain 1"/>
    <property type="match status" value="28"/>
</dbReference>
<dbReference type="Gene3D" id="2.60.120.290">
    <property type="entry name" value="Spermadhesin, CUB domain"/>
    <property type="match status" value="14"/>
</dbReference>
<dbReference type="InterPro" id="IPR000859">
    <property type="entry name" value="CUB_dom"/>
</dbReference>
<dbReference type="InterPro" id="IPR051277">
    <property type="entry name" value="SEZ6_CSMD_C4BPB_Regulators"/>
</dbReference>
<dbReference type="InterPro" id="IPR035914">
    <property type="entry name" value="Sperma_CUB_dom_sf"/>
</dbReference>
<dbReference type="InterPro" id="IPR035976">
    <property type="entry name" value="Sushi/SCR/CCP_sf"/>
</dbReference>
<dbReference type="InterPro" id="IPR000436">
    <property type="entry name" value="Sushi_SCR_CCP_dom"/>
</dbReference>
<dbReference type="PANTHER" id="PTHR45656">
    <property type="entry name" value="PROTEIN CBR-CLEC-78"/>
    <property type="match status" value="1"/>
</dbReference>
<dbReference type="PANTHER" id="PTHR45656:SF4">
    <property type="entry name" value="PROTEIN CBR-CLEC-78"/>
    <property type="match status" value="1"/>
</dbReference>
<dbReference type="Pfam" id="PF00431">
    <property type="entry name" value="CUB"/>
    <property type="match status" value="14"/>
</dbReference>
<dbReference type="Pfam" id="PF00084">
    <property type="entry name" value="Sushi"/>
    <property type="match status" value="28"/>
</dbReference>
<dbReference type="SMART" id="SM00032">
    <property type="entry name" value="CCP"/>
    <property type="match status" value="28"/>
</dbReference>
<dbReference type="SMART" id="SM00042">
    <property type="entry name" value="CUB"/>
    <property type="match status" value="14"/>
</dbReference>
<dbReference type="SUPFAM" id="SSF57535">
    <property type="entry name" value="Complement control module/SCR domain"/>
    <property type="match status" value="28"/>
</dbReference>
<dbReference type="SUPFAM" id="SSF49854">
    <property type="entry name" value="Spermadhesin, CUB domain"/>
    <property type="match status" value="14"/>
</dbReference>
<dbReference type="PROSITE" id="PS01180">
    <property type="entry name" value="CUB"/>
    <property type="match status" value="14"/>
</dbReference>
<dbReference type="PROSITE" id="PS50923">
    <property type="entry name" value="SUSHI"/>
    <property type="match status" value="28"/>
</dbReference>
<sequence length="3707" mass="405762">MKGSRKGESRAKESKPREPGTRRCAKCGRLDFILKKKMGIKSGFTFWNLVFLLTLSCVKGFIYTCGGTLKGLNGTIESPGFPYGYPNGANCTWVIIAEERNRIQIVFQSFALEEEYDYLSLYDGHPHPTNFRTRLTGFHLPPPVTSTKSVFSLRLTSDFAVSAHGFKVYYEELQSSSCGNPGVPPKGVLYGTRFDVGDKIRYSCVTGYILDGHPQLTCIANSVNTASWDFPVPICRAEDACGGTMRGSSGIISSPGFPNEYHNNADCTWTIVAEPGDTISLIFTDFQMEEKYDYLEIEGSEPPTIWLSGMNIPPPIISNKNWLRLHFVTDSNHRYRGFSAPYQGSSPLTLTASIGELEEHIRTATGAIDVASTPADVTVSSVTAVTSHRLSEEQRVQVRSLSDSGLDPNTPEDQLSPHQADTQSTSRRPRNAEQIERTKELAVVTHRVKKAIDFKSRGFKLFPGKDNSNKFSLLNEGGIKTASNLCPDPGEPENGKRFGSDFSLGSTVQFSCDEDYVLQGAKSITCQRIAEVFAAWSDHRPVCKVKTCGSNLQGPSGTFTSPNFPFQYDSNAQCVWVITAVNTNKVIQINFEEFDLEIGYDTLTIGDGGEVGDPRTVLQVLTGSFVPDLIVSMRSQMWLHLQTDESVGSVGFKVNYKEIEKESCGDPGTPLYGIREGDGFSNRDVLRFECQFGFELIGEKSIVCQENNQWSANIPICIFPCLSNFTAPMGTVLSPDYPEGYGNNLNCIWTIISDPGSRIHLSFNDFDLESQFDFLAVKDGDSPDSPILGTFTGAEVPSHLTSNSHILRLEFQADHSMSGRGFNITYNTFGHNECPDPGIPINARRFGDNFQLGSSISVICEEGFIKTQGTETITCILMDGKVMWSGPIPRCGAPCGGHFSAPSGVILSPGWPGYYKDSLNCEWVIEAEPGHSIKITFERFQTELNYDVLEVHDGPNLLSPLLGSYNGTQVPQFLFSSSNFIYLLFTTDNSRSNNGFKIHYESVTVNTYSCLDPGIPVHGRRYGHDFSIGSTVSFSCDPGYRLSHEEPLLCEKNHWWSHPLPTCDALCGGDVRGPSGTILSPGYPEFYPNSLNCTWTVDVTHGKGVQFNFHTFHLEDHHDYLLITENGSFTQPLARLTGSELPSTINAGLYGNFRAQLRFISDFSISYEGFNITFSEYNLEPCEDPGIPQYGSRVGFSFGVGDTLTFSCSLGYRLEGSSEIICLGGGRRVWSAPLPRCVAECGASATNNEGILLSPNYPLNYENNHECIYSLQVQAGKGINISARTFHLAQGDVLKIYDGKDKTTHLLGAFTGASMRGLTLSSTSNQLWLEFNSDSEGTDEGFQLVYTSFELSHCEDPGIPQFGYKISDQGHFAGSTIIYGCNPGYTLHGSSLLKCMTGERRAWDYPLPSCIAECGGRFKGESSGRILSPGYPFPYDNNLRCMWMIEVDPGNIVSLQFLAFDTEASHDILRVWDGPPENEMLLKEVSGSLIPDGIHSTLNIVTIQFDTDFYISKSGFAIQFSSSVATACRDPGVPMNGTRNGDGREPGDTVVFQCDPGYELQGQERITCIQVENRYFWQPSPPVCIAPCGGNLTGSSGFILSPNFPHPYPHSRDCDWTISVNTDYVISLAFISFSIEPNYDFLYIYDGPDSNSPLIGSFQDSKLPERIESSSNTMHLAFRSDGSVSYTGFHLEYKAKLRESCFDPGNIMNGTRLGMDYKLGSTVTYYCDAGYVLQGYSTLTCIMGDDGRPGWNRVLPSCHAPCGSRSTGSEGTVLSPNYPKNYSVDHNCVYSIAVPKEFVVFGQFVFFQTSLHDVVEVFDGPTQQSPLLSSLSGSHSGESLPLSSGNQITIRFTSVGPITAKGFHFVYQAVPRTSSTQCSSVPEPRFGRRIGNDFAVGSLVLFECNPGYILHGSRAIRCETVPNSLAQWNDSLPTCIVPCGGILTKRKGTILSPGYPEPYDNNLNCVWKITVPEGAGIQVQVVSFATEHNWDSLDFYDGGDNNAPRLGSYSGTTIPHLLNSTSNNLYLNFQSDISVSAAGFHLEYTAIGLDSCPEPQTPSSGIKVGDRYMVGDVVSFQCDQGYSLQGHSHITCMPGPVRRWNYPIPICLAQCGGAMSDFSGVILSPGFPGNYPSSLDCTWTIKLPIGFGVHLQFVNFSTETIHDYLEVRSGSSEISTVIGRLSGPQIPSSLFSTTHETSLYFHSDYSQNKQGFHIVYQAYQLQSCPDPRPFRNGFVIGNDFTVGQTISFECFPGYTLIGNSALTCLHGVSRNWNHPLPRCEALCGGNITAMNGTIYSPGYPDEYPNFQDCFWLVRVPPGNGIYINFTVLQTEPIYDFITVWDGPDQNSPQIGQFSGNTALESVYSTSNQILIKFHSDFTTSGFFVLSYHAYQLRVCQPPPPVPNAEILTEDDEFEIGDIIRYQCLPGFTLVGNAILTCRLGERLQMDGAPPVCQVLCPANELRLDSTGVILSPGYPDSYPNLQMCAWSISVEKGYNISMFVEFFQTEKEFDVLQVYDGPNIQSPVLISLSGDYSAAFNVTSNGHEVFLQWSADHGNNKKGFRIRYIAFYCSTPESPPHGYIISQTGGQLNSVVRWACDRGFRLVGKSSAVCRKSSYGYHSWDAPVPACQAISCGIPKAPTNGGILTTDYLVGTRVTYFCNDGYRLSSKELTTATCQSDGTWSNHNKTPRCVVVTCPSINSFTLDHGRWRIVNGSHYEYKTKVVFSCDPGYHGLGPASIECLPNGTWSWRTERPYCQIISCGELPTPPNGNKIGTQTSYGSTAIFTCDLGFMLVGSAVRECLSSGLWSGSETRCLAGHCGIPELIVNGQVIGENYGYRDTVVYQCNPGFRLIGSSVRICQQDHNWSGQLPSCVPVSCGHPGSPIYGRTSGNGFNFNDVVTFSCNIGYLMQGPTKAQCQANRQWSHPPPVCKVVNCSDPGIPANSKRESKIEHGNFTYGTVVFYDCNPGYFLFGSSVLICQPNGQWDKPLPECIMIDCGHPGIPPNAVLSGEKYTFGSTVHYSCTGKRSLLGQASRTCQLNGHWSGSQPHCSGDTTGTCGDPGTPGHGSRQESDFRTKSTVRFACDTGYILYGSEERTCLSNGSWTGRQPECKAVQCGNPGTTANGKVFRIDGTTFSSSVIYSCLEGYILSGPSVRQCTANGTWSGSLPNCTIISCGDPGIPANGLRYGDDFVVGQNVSYMCQPGYTIELNGSRVRTCTTNGTWSGVMPTCRAVTCSTPPQISNGRLEGTNFDWGFSISYICSAGYELSFPAVLTCVGNGTWSGEVPQCLPKFCGDPGIPSQGKREGKSFIYQSEVSFSCNSPFILVGSSTRLCQTDGTWSGSSPHCIEPTRTSCENPGVPRHGSQNNTFGFQVGSVVQFHCKKGHLLQGSTTRTCLPDLTWSGIQPECIPHSCKQPESPAHANVVGMDLPSHGYTLIYTCQPGFFLAGGTEHRVCRSDNTWTGKVPVCEAGSKILVKDPRPALGTPSPKLSVPDDVFAQNYIWKGSYNFKGRKQPMTLTVTSFNASTGRVNATLSNSDMELLLSGVYKSQEARLMLHIYLIKVPAHASVKKMKEENWAMDGFVSAEPDGATYVFQGFIKGKDYGQFGLQRLGLNTSEGSNSSNQPHGTNSSSVAIAILVPFFALIFAGFGFYLYKQRTAPKTQYTGCSVHENNNGQAAFENPMYDTNAKSVEGKAVRFDPNLNTVCTMV</sequence>
<name>CSMD3_MOUSE</name>
<reference key="1">
    <citation type="journal article" date="2005" name="Science">
        <title>The transcriptional landscape of the mammalian genome.</title>
        <authorList>
            <person name="Carninci P."/>
            <person name="Kasukawa T."/>
            <person name="Katayama S."/>
            <person name="Gough J."/>
            <person name="Frith M.C."/>
            <person name="Maeda N."/>
            <person name="Oyama R."/>
            <person name="Ravasi T."/>
            <person name="Lenhard B."/>
            <person name="Wells C."/>
            <person name="Kodzius R."/>
            <person name="Shimokawa K."/>
            <person name="Bajic V.B."/>
            <person name="Brenner S.E."/>
            <person name="Batalov S."/>
            <person name="Forrest A.R."/>
            <person name="Zavolan M."/>
            <person name="Davis M.J."/>
            <person name="Wilming L.G."/>
            <person name="Aidinis V."/>
            <person name="Allen J.E."/>
            <person name="Ambesi-Impiombato A."/>
            <person name="Apweiler R."/>
            <person name="Aturaliya R.N."/>
            <person name="Bailey T.L."/>
            <person name="Bansal M."/>
            <person name="Baxter L."/>
            <person name="Beisel K.W."/>
            <person name="Bersano T."/>
            <person name="Bono H."/>
            <person name="Chalk A.M."/>
            <person name="Chiu K.P."/>
            <person name="Choudhary V."/>
            <person name="Christoffels A."/>
            <person name="Clutterbuck D.R."/>
            <person name="Crowe M.L."/>
            <person name="Dalla E."/>
            <person name="Dalrymple B.P."/>
            <person name="de Bono B."/>
            <person name="Della Gatta G."/>
            <person name="di Bernardo D."/>
            <person name="Down T."/>
            <person name="Engstrom P."/>
            <person name="Fagiolini M."/>
            <person name="Faulkner G."/>
            <person name="Fletcher C.F."/>
            <person name="Fukushima T."/>
            <person name="Furuno M."/>
            <person name="Futaki S."/>
            <person name="Gariboldi M."/>
            <person name="Georgii-Hemming P."/>
            <person name="Gingeras T.R."/>
            <person name="Gojobori T."/>
            <person name="Green R.E."/>
            <person name="Gustincich S."/>
            <person name="Harbers M."/>
            <person name="Hayashi Y."/>
            <person name="Hensch T.K."/>
            <person name="Hirokawa N."/>
            <person name="Hill D."/>
            <person name="Huminiecki L."/>
            <person name="Iacono M."/>
            <person name="Ikeo K."/>
            <person name="Iwama A."/>
            <person name="Ishikawa T."/>
            <person name="Jakt M."/>
            <person name="Kanapin A."/>
            <person name="Katoh M."/>
            <person name="Kawasawa Y."/>
            <person name="Kelso J."/>
            <person name="Kitamura H."/>
            <person name="Kitano H."/>
            <person name="Kollias G."/>
            <person name="Krishnan S.P."/>
            <person name="Kruger A."/>
            <person name="Kummerfeld S.K."/>
            <person name="Kurochkin I.V."/>
            <person name="Lareau L.F."/>
            <person name="Lazarevic D."/>
            <person name="Lipovich L."/>
            <person name="Liu J."/>
            <person name="Liuni S."/>
            <person name="McWilliam S."/>
            <person name="Madan Babu M."/>
            <person name="Madera M."/>
            <person name="Marchionni L."/>
            <person name="Matsuda H."/>
            <person name="Matsuzawa S."/>
            <person name="Miki H."/>
            <person name="Mignone F."/>
            <person name="Miyake S."/>
            <person name="Morris K."/>
            <person name="Mottagui-Tabar S."/>
            <person name="Mulder N."/>
            <person name="Nakano N."/>
            <person name="Nakauchi H."/>
            <person name="Ng P."/>
            <person name="Nilsson R."/>
            <person name="Nishiguchi S."/>
            <person name="Nishikawa S."/>
            <person name="Nori F."/>
            <person name="Ohara O."/>
            <person name="Okazaki Y."/>
            <person name="Orlando V."/>
            <person name="Pang K.C."/>
            <person name="Pavan W.J."/>
            <person name="Pavesi G."/>
            <person name="Pesole G."/>
            <person name="Petrovsky N."/>
            <person name="Piazza S."/>
            <person name="Reed J."/>
            <person name="Reid J.F."/>
            <person name="Ring B.Z."/>
            <person name="Ringwald M."/>
            <person name="Rost B."/>
            <person name="Ruan Y."/>
            <person name="Salzberg S.L."/>
            <person name="Sandelin A."/>
            <person name="Schneider C."/>
            <person name="Schoenbach C."/>
            <person name="Sekiguchi K."/>
            <person name="Semple C.A."/>
            <person name="Seno S."/>
            <person name="Sessa L."/>
            <person name="Sheng Y."/>
            <person name="Shibata Y."/>
            <person name="Shimada H."/>
            <person name="Shimada K."/>
            <person name="Silva D."/>
            <person name="Sinclair B."/>
            <person name="Sperling S."/>
            <person name="Stupka E."/>
            <person name="Sugiura K."/>
            <person name="Sultana R."/>
            <person name="Takenaka Y."/>
            <person name="Taki K."/>
            <person name="Tammoja K."/>
            <person name="Tan S.L."/>
            <person name="Tang S."/>
            <person name="Taylor M.S."/>
            <person name="Tegner J."/>
            <person name="Teichmann S.A."/>
            <person name="Ueda H.R."/>
            <person name="van Nimwegen E."/>
            <person name="Verardo R."/>
            <person name="Wei C.L."/>
            <person name="Yagi K."/>
            <person name="Yamanishi H."/>
            <person name="Zabarovsky E."/>
            <person name="Zhu S."/>
            <person name="Zimmer A."/>
            <person name="Hide W."/>
            <person name="Bult C."/>
            <person name="Grimmond S.M."/>
            <person name="Teasdale R.D."/>
            <person name="Liu E.T."/>
            <person name="Brusic V."/>
            <person name="Quackenbush J."/>
            <person name="Wahlestedt C."/>
            <person name="Mattick J.S."/>
            <person name="Hume D.A."/>
            <person name="Kai C."/>
            <person name="Sasaki D."/>
            <person name="Tomaru Y."/>
            <person name="Fukuda S."/>
            <person name="Kanamori-Katayama M."/>
            <person name="Suzuki M."/>
            <person name="Aoki J."/>
            <person name="Arakawa T."/>
            <person name="Iida J."/>
            <person name="Imamura K."/>
            <person name="Itoh M."/>
            <person name="Kato T."/>
            <person name="Kawaji H."/>
            <person name="Kawagashira N."/>
            <person name="Kawashima T."/>
            <person name="Kojima M."/>
            <person name="Kondo S."/>
            <person name="Konno H."/>
            <person name="Nakano K."/>
            <person name="Ninomiya N."/>
            <person name="Nishio T."/>
            <person name="Okada M."/>
            <person name="Plessy C."/>
            <person name="Shibata K."/>
            <person name="Shiraki T."/>
            <person name="Suzuki S."/>
            <person name="Tagami M."/>
            <person name="Waki K."/>
            <person name="Watahiki A."/>
            <person name="Okamura-Oho Y."/>
            <person name="Suzuki H."/>
            <person name="Kawai J."/>
            <person name="Hayashizaki Y."/>
        </authorList>
    </citation>
    <scope>NUCLEOTIDE SEQUENCE [LARGE SCALE MRNA] (ISOFORM 3)</scope>
    <scope>NUCLEOTIDE SEQUENCE [LARGE SCALE MRNA] OF 1-578 (ISOFORM 1)</scope>
    <source>
        <strain>C57BL/6J</strain>
        <tissue>Corpora quadrigemina</tissue>
        <tissue>Testis</tissue>
    </source>
</reference>
<reference key="2">
    <citation type="journal article" date="2009" name="PLoS Biol.">
        <title>Lineage-specific biology revealed by a finished genome assembly of the mouse.</title>
        <authorList>
            <person name="Church D.M."/>
            <person name="Goodstadt L."/>
            <person name="Hillier L.W."/>
            <person name="Zody M.C."/>
            <person name="Goldstein S."/>
            <person name="She X."/>
            <person name="Bult C.J."/>
            <person name="Agarwala R."/>
            <person name="Cherry J.L."/>
            <person name="DiCuccio M."/>
            <person name="Hlavina W."/>
            <person name="Kapustin Y."/>
            <person name="Meric P."/>
            <person name="Maglott D."/>
            <person name="Birtle Z."/>
            <person name="Marques A.C."/>
            <person name="Graves T."/>
            <person name="Zhou S."/>
            <person name="Teague B."/>
            <person name="Potamousis K."/>
            <person name="Churas C."/>
            <person name="Place M."/>
            <person name="Herschleb J."/>
            <person name="Runnheim R."/>
            <person name="Forrest D."/>
            <person name="Amos-Landgraf J."/>
            <person name="Schwartz D.C."/>
            <person name="Cheng Z."/>
            <person name="Lindblad-Toh K."/>
            <person name="Eichler E.E."/>
            <person name="Ponting C.P."/>
        </authorList>
    </citation>
    <scope>NUCLEOTIDE SEQUENCE [LARGE SCALE GENOMIC DNA]</scope>
    <source>
        <strain>C57BL/6J</strain>
    </source>
</reference>
<reference key="3">
    <citation type="journal article" date="2003" name="DNA Res.">
        <title>Prediction of the coding sequences of mouse homologues of KIAA gene: II. The complete nucleotide sequences of 400 mouse KIAA-homologous cDNAs identified by screening of terminal sequences of cDNA clones randomly sampled from size-fractionated libraries.</title>
        <authorList>
            <person name="Okazaki N."/>
            <person name="Kikuno R."/>
            <person name="Ohara R."/>
            <person name="Inamoto S."/>
            <person name="Aizawa H."/>
            <person name="Yuasa S."/>
            <person name="Nakajima D."/>
            <person name="Nagase T."/>
            <person name="Ohara O."/>
            <person name="Koga H."/>
        </authorList>
    </citation>
    <scope>NUCLEOTIDE SEQUENCE [LARGE SCALE MRNA] OF 805-3670 (ISOFORM 2)</scope>
    <source>
        <tissue>Brain</tissue>
    </source>
</reference>
<reference key="4">
    <citation type="journal article" date="2010" name="Cell">
        <title>A tissue-specific atlas of mouse protein phosphorylation and expression.</title>
        <authorList>
            <person name="Huttlin E.L."/>
            <person name="Jedrychowski M.P."/>
            <person name="Elias J.E."/>
            <person name="Goswami T."/>
            <person name="Rad R."/>
            <person name="Beausoleil S.A."/>
            <person name="Villen J."/>
            <person name="Haas W."/>
            <person name="Sowa M.E."/>
            <person name="Gygi S.P."/>
        </authorList>
    </citation>
    <scope>IDENTIFICATION BY MASS SPECTROMETRY [LARGE SCALE ANALYSIS]</scope>
    <source>
        <tissue>Brain</tissue>
    </source>
</reference>
<reference key="5">
    <citation type="journal article" date="2016" name="Neurosci. Res.">
        <title>CUB and Sushi multiple domains 3 regulates dendrite development.</title>
        <authorList>
            <person name="Mizukami T."/>
            <person name="Kohno T."/>
            <person name="Hattori M."/>
        </authorList>
    </citation>
    <scope>SUBCELLULAR LOCATION</scope>
    <scope>TISSUE SPECIFICITY</scope>
    <scope>FUNCTION</scope>
</reference>
<proteinExistence type="evidence at protein level"/>
<protein>
    <recommendedName>
        <fullName>CUB and sushi domain-containing protein 3</fullName>
    </recommendedName>
    <alternativeName>
        <fullName>CUB and sushi multiple domains protein 3</fullName>
    </alternativeName>
</protein>
<comment type="function">
    <text evidence="6">Involved in dendrite development.</text>
</comment>
<comment type="subcellular location">
    <subcellularLocation>
        <location evidence="6">Cell membrane</location>
        <topology evidence="9">Multi-pass membrane protein</topology>
    </subcellularLocation>
</comment>
<comment type="alternative products">
    <event type="alternative splicing"/>
    <isoform>
        <id>Q80T79-3</id>
        <name>1</name>
        <sequence type="displayed"/>
    </isoform>
    <isoform>
        <id>Q80T79-1</id>
        <name>2</name>
        <sequence type="described" ref="VSP_027009"/>
    </isoform>
    <isoform>
        <id>Q80T79-2</id>
        <name>3</name>
        <sequence type="described" ref="VSP_009053 VSP_009054 VSP_009055 VSP_009056"/>
    </isoform>
</comment>
<comment type="tissue specificity">
    <text evidence="6">Expressed in the apical dendrites of postnatal hippocampal neurons (at protein level).</text>
</comment>
<comment type="domain">
    <text evidence="6">The intracellular region is dispensable for its function.</text>
</comment>
<comment type="similarity">
    <text evidence="9">Belongs to the CSMD family.</text>
</comment>
<accession>Q80T79</accession>
<accession>Q3USM6</accession>
<accession>Q8BVJ0</accession>
<accession>Q9D588</accession>
<feature type="chain" id="PRO_0000079406" description="CUB and sushi domain-containing protein 3">
    <location>
        <begin position="1"/>
        <end position="3707"/>
    </location>
</feature>
<feature type="topological domain" description="Cytoplasmic" evidence="2">
    <location>
        <begin position="1"/>
        <end position="42"/>
    </location>
</feature>
<feature type="transmembrane region" description="Helical" evidence="2">
    <location>
        <begin position="43"/>
        <end position="63"/>
    </location>
</feature>
<feature type="topological domain" description="Extracellular" evidence="2">
    <location>
        <begin position="64"/>
        <end position="3630"/>
    </location>
</feature>
<feature type="transmembrane region" description="Helical" evidence="2">
    <location>
        <begin position="3631"/>
        <end position="3651"/>
    </location>
</feature>
<feature type="topological domain" description="Cytoplasmic" evidence="2">
    <location>
        <begin position="3652"/>
        <end position="3707"/>
    </location>
</feature>
<feature type="domain" description="CUB 1" evidence="3">
    <location>
        <begin position="65"/>
        <end position="173"/>
    </location>
</feature>
<feature type="domain" description="Sushi 1" evidence="4">
    <location>
        <begin position="176"/>
        <end position="237"/>
    </location>
</feature>
<feature type="domain" description="CUB 2" evidence="3">
    <location>
        <begin position="241"/>
        <end position="345"/>
    </location>
</feature>
<feature type="domain" description="Sushi 2" evidence="4">
    <location>
        <begin position="484"/>
        <end position="545"/>
    </location>
</feature>
<feature type="domain" description="CUB 3" evidence="3">
    <location>
        <begin position="548"/>
        <end position="659"/>
    </location>
</feature>
<feature type="domain" description="Sushi 3" evidence="4">
    <location>
        <begin position="662"/>
        <end position="719"/>
    </location>
</feature>
<feature type="domain" description="CUB 4" evidence="3">
    <location>
        <begin position="721"/>
        <end position="829"/>
    </location>
</feature>
<feature type="domain" description="Sushi 4" evidence="4">
    <location>
        <begin position="832"/>
        <end position="893"/>
    </location>
</feature>
<feature type="domain" description="CUB 5" evidence="3">
    <location>
        <begin position="895"/>
        <end position="1003"/>
    </location>
</feature>
<feature type="domain" description="Sushi 5" evidence="4">
    <location>
        <begin position="1008"/>
        <end position="1065"/>
    </location>
</feature>
<feature type="domain" description="CUB 6" evidence="3">
    <location>
        <begin position="1067"/>
        <end position="1177"/>
    </location>
</feature>
<feature type="domain" description="Sushi 6" evidence="4">
    <location>
        <begin position="1180"/>
        <end position="1239"/>
    </location>
</feature>
<feature type="domain" description="CUB 7" evidence="3">
    <location>
        <begin position="1241"/>
        <end position="1349"/>
    </location>
</feature>
<feature type="domain" description="Sushi 7" evidence="4">
    <location>
        <begin position="1352"/>
        <end position="1412"/>
    </location>
</feature>
<feature type="domain" description="CUB 8" evidence="3">
    <location>
        <begin position="1414"/>
        <end position="1523"/>
    </location>
</feature>
<feature type="domain" description="Sushi 8" evidence="4">
    <location>
        <begin position="1526"/>
        <end position="1586"/>
    </location>
</feature>
<feature type="domain" description="CUB 9" evidence="3">
    <location>
        <begin position="1588"/>
        <end position="1696"/>
    </location>
</feature>
<feature type="domain" description="Sushi 9" evidence="4">
    <location>
        <begin position="1699"/>
        <end position="1760"/>
    </location>
</feature>
<feature type="domain" description="CUB 10" evidence="3">
    <location>
        <begin position="1762"/>
        <end position="1870"/>
    </location>
</feature>
<feature type="domain" description="Sushi 10" evidence="4">
    <location>
        <begin position="1876"/>
        <end position="1937"/>
    </location>
</feature>
<feature type="domain" description="CUB 11" evidence="3">
    <location>
        <begin position="1939"/>
        <end position="2047"/>
    </location>
</feature>
<feature type="domain" description="Sushi 11" evidence="4">
    <location>
        <begin position="2050"/>
        <end position="2109"/>
    </location>
</feature>
<feature type="domain" description="CUB 12" evidence="3">
    <location>
        <begin position="2111"/>
        <end position="2219"/>
    </location>
</feature>
<feature type="domain" description="Sushi 12" evidence="4">
    <location>
        <begin position="2222"/>
        <end position="2281"/>
    </location>
</feature>
<feature type="domain" description="CUB 13" evidence="3">
    <location>
        <begin position="2283"/>
        <end position="2394"/>
    </location>
</feature>
<feature type="domain" description="Sushi 13" evidence="4">
    <location>
        <begin position="2393"/>
        <end position="2454"/>
    </location>
</feature>
<feature type="domain" description="CUB 14" evidence="3">
    <location>
        <begin position="2456"/>
        <end position="2567"/>
    </location>
</feature>
<feature type="domain" description="Sushi 14" evidence="4">
    <location>
        <begin position="2567"/>
        <end position="2629"/>
    </location>
</feature>
<feature type="domain" description="Sushi 15" evidence="4">
    <location>
        <begin position="2630"/>
        <end position="2691"/>
    </location>
</feature>
<feature type="domain" description="Sushi 16" evidence="4">
    <location>
        <begin position="2692"/>
        <end position="2756"/>
    </location>
</feature>
<feature type="domain" description="Sushi 17" evidence="4">
    <location>
        <begin position="2757"/>
        <end position="2814"/>
    </location>
</feature>
<feature type="domain" description="Sushi 18" evidence="4">
    <location>
        <begin position="2815"/>
        <end position="2872"/>
    </location>
</feature>
<feature type="domain" description="Sushi 19" evidence="4">
    <location>
        <begin position="2873"/>
        <end position="2930"/>
    </location>
</feature>
<feature type="domain" description="Sushi 20" evidence="4">
    <location>
        <begin position="2931"/>
        <end position="2992"/>
    </location>
</feature>
<feature type="domain" description="Sushi 21" evidence="4">
    <location>
        <begin position="2993"/>
        <end position="3050"/>
    </location>
</feature>
<feature type="domain" description="Sushi 22" evidence="4">
    <location>
        <begin position="3054"/>
        <end position="3111"/>
    </location>
</feature>
<feature type="domain" description="Sushi 23" evidence="4">
    <location>
        <begin position="3112"/>
        <end position="3170"/>
    </location>
</feature>
<feature type="domain" description="Sushi 24" evidence="4">
    <location>
        <begin position="3171"/>
        <end position="3230"/>
    </location>
</feature>
<feature type="domain" description="Sushi 25" evidence="4">
    <location>
        <begin position="3231"/>
        <end position="3288"/>
    </location>
</feature>
<feature type="domain" description="Sushi 26" evidence="4">
    <location>
        <begin position="3289"/>
        <end position="3346"/>
    </location>
</feature>
<feature type="domain" description="Sushi 27" evidence="4">
    <location>
        <begin position="3350"/>
        <end position="3408"/>
    </location>
</feature>
<feature type="domain" description="Sushi 28" evidence="4">
    <location>
        <begin position="3409"/>
        <end position="3468"/>
    </location>
</feature>
<feature type="region of interest" description="Disordered" evidence="5">
    <location>
        <begin position="1"/>
        <end position="22"/>
    </location>
</feature>
<feature type="region of interest" description="Disordered" evidence="5">
    <location>
        <begin position="388"/>
        <end position="437"/>
    </location>
</feature>
<feature type="region of interest" description="Disordered" evidence="5">
    <location>
        <begin position="3052"/>
        <end position="3071"/>
    </location>
</feature>
<feature type="compositionally biased region" description="Basic and acidic residues" evidence="5">
    <location>
        <begin position="1"/>
        <end position="21"/>
    </location>
</feature>
<feature type="compositionally biased region" description="Polar residues" evidence="5">
    <location>
        <begin position="411"/>
        <end position="426"/>
    </location>
</feature>
<feature type="compositionally biased region" description="Low complexity" evidence="5">
    <location>
        <begin position="3052"/>
        <end position="3065"/>
    </location>
</feature>
<feature type="glycosylation site" description="N-linked (GlcNAc...) asparagine" evidence="2">
    <location>
        <position position="73"/>
    </location>
</feature>
<feature type="glycosylation site" description="N-linked (GlcNAc...) asparagine" evidence="2">
    <location>
        <position position="90"/>
    </location>
</feature>
<feature type="glycosylation site" description="N-linked (GlcNAc...) asparagine" evidence="2">
    <location>
        <position position="724"/>
    </location>
</feature>
<feature type="glycosylation site" description="N-linked (GlcNAc...) asparagine" evidence="2">
    <location>
        <position position="823"/>
    </location>
</feature>
<feature type="glycosylation site" description="N-linked (GlcNAc...) asparagine" evidence="2">
    <location>
        <position position="966"/>
    </location>
</feature>
<feature type="glycosylation site" description="N-linked (GlcNAc...) asparagine" evidence="2">
    <location>
        <position position="1092"/>
    </location>
</feature>
<feature type="glycosylation site" description="N-linked (GlcNAc...) asparagine" evidence="2">
    <location>
        <position position="1126"/>
    </location>
</feature>
<feature type="glycosylation site" description="N-linked (GlcNAc...) asparagine" evidence="2">
    <location>
        <position position="1171"/>
    </location>
</feature>
<feature type="glycosylation site" description="N-linked (GlcNAc...) asparagine" evidence="2">
    <location>
        <position position="1280"/>
    </location>
</feature>
<feature type="glycosylation site" description="N-linked (GlcNAc...) asparagine" evidence="2">
    <location>
        <position position="1536"/>
    </location>
</feature>
<feature type="glycosylation site" description="N-linked (GlcNAc...) asparagine" evidence="2">
    <location>
        <position position="1591"/>
    </location>
</feature>
<feature type="glycosylation site" description="N-linked (GlcNAc...) asparagine" evidence="2">
    <location>
        <position position="1709"/>
    </location>
</feature>
<feature type="glycosylation site" description="N-linked (GlcNAc...) asparagine" evidence="2">
    <location>
        <position position="1781"/>
    </location>
</feature>
<feature type="glycosylation site" description="N-linked (GlcNAc...) asparagine" evidence="2">
    <location>
        <position position="1929"/>
    </location>
</feature>
<feature type="glycosylation site" description="N-linked (GlcNAc...) asparagine" evidence="2">
    <location>
        <position position="2019"/>
    </location>
</feature>
<feature type="glycosylation site" description="N-linked (GlcNAc...) asparagine" evidence="2">
    <location>
        <position position="2155"/>
    </location>
</feature>
<feature type="glycosylation site" description="N-linked (GlcNAc...) asparagine" evidence="2">
    <location>
        <position position="2286"/>
    </location>
</feature>
<feature type="glycosylation site" description="N-linked (GlcNAc...) asparagine" evidence="2">
    <location>
        <position position="2291"/>
    </location>
</feature>
<feature type="disulfide bond" evidence="1">
    <location>
        <begin position="65"/>
        <end position="91"/>
    </location>
</feature>
<feature type="disulfide bond" evidence="1">
    <location>
        <begin position="178"/>
        <end position="218"/>
    </location>
</feature>
<feature type="disulfide bond" evidence="1">
    <location>
        <begin position="204"/>
        <end position="235"/>
    </location>
</feature>
<feature type="disulfide bond" evidence="1">
    <location>
        <begin position="241"/>
        <end position="267"/>
    </location>
</feature>
<feature type="disulfide bond" evidence="1">
    <location>
        <begin position="486"/>
        <end position="526"/>
    </location>
</feature>
<feature type="disulfide bond" evidence="1">
    <location>
        <begin position="512"/>
        <end position="543"/>
    </location>
</feature>
<feature type="disulfide bond" evidence="1">
    <location>
        <begin position="548"/>
        <end position="574"/>
    </location>
</feature>
<feature type="disulfide bond" evidence="1">
    <location>
        <begin position="664"/>
        <end position="704"/>
    </location>
</feature>
<feature type="disulfide bond" evidence="1">
    <location>
        <begin position="690"/>
        <end position="717"/>
    </location>
</feature>
<feature type="disulfide bond" evidence="1">
    <location>
        <begin position="721"/>
        <end position="747"/>
    </location>
</feature>
<feature type="disulfide bond" evidence="1">
    <location>
        <begin position="834"/>
        <end position="875"/>
    </location>
</feature>
<feature type="disulfide bond" evidence="1">
    <location>
        <begin position="860"/>
        <end position="891"/>
    </location>
</feature>
<feature type="disulfide bond" evidence="1">
    <location>
        <begin position="895"/>
        <end position="921"/>
    </location>
</feature>
<feature type="disulfide bond" evidence="1">
    <location>
        <begin position="1010"/>
        <end position="1050"/>
    </location>
</feature>
<feature type="disulfide bond" evidence="1">
    <location>
        <begin position="1036"/>
        <end position="1063"/>
    </location>
</feature>
<feature type="disulfide bond" evidence="1">
    <location>
        <begin position="1067"/>
        <end position="1093"/>
    </location>
</feature>
<feature type="disulfide bond" evidence="1">
    <location>
        <begin position="1182"/>
        <end position="1222"/>
    </location>
</feature>
<feature type="disulfide bond" evidence="1">
    <location>
        <begin position="1208"/>
        <end position="1237"/>
    </location>
</feature>
<feature type="disulfide bond" evidence="1">
    <location>
        <begin position="1241"/>
        <end position="1267"/>
    </location>
</feature>
<feature type="disulfide bond" evidence="1">
    <location>
        <begin position="1354"/>
        <end position="1395"/>
    </location>
</feature>
<feature type="disulfide bond" evidence="1">
    <location>
        <begin position="1381"/>
        <end position="1410"/>
    </location>
</feature>
<feature type="disulfide bond" evidence="1">
    <location>
        <begin position="1414"/>
        <end position="1441"/>
    </location>
</feature>
<feature type="disulfide bond" evidence="1">
    <location>
        <begin position="1528"/>
        <end position="1568"/>
    </location>
</feature>
<feature type="disulfide bond" evidence="1">
    <location>
        <begin position="1554"/>
        <end position="1584"/>
    </location>
</feature>
<feature type="disulfide bond" evidence="1">
    <location>
        <begin position="1588"/>
        <end position="1614"/>
    </location>
</feature>
<feature type="disulfide bond" evidence="1">
    <location>
        <begin position="1701"/>
        <end position="1741"/>
    </location>
</feature>
<feature type="disulfide bond" evidence="1">
    <location>
        <begin position="1727"/>
        <end position="1758"/>
    </location>
</feature>
<feature type="disulfide bond" evidence="1">
    <location>
        <begin position="1762"/>
        <end position="1788"/>
    </location>
</feature>
<feature type="disulfide bond" evidence="1">
    <location>
        <begin position="1878"/>
        <end position="1918"/>
    </location>
</feature>
<feature type="disulfide bond" evidence="1">
    <location>
        <begin position="1904"/>
        <end position="1935"/>
    </location>
</feature>
<feature type="disulfide bond" evidence="1">
    <location>
        <begin position="1939"/>
        <end position="1965"/>
    </location>
</feature>
<feature type="disulfide bond" evidence="1">
    <location>
        <begin position="2052"/>
        <end position="2092"/>
    </location>
</feature>
<feature type="disulfide bond" evidence="1">
    <location>
        <begin position="2078"/>
        <end position="2107"/>
    </location>
</feature>
<feature type="disulfide bond" evidence="1">
    <location>
        <begin position="2111"/>
        <end position="2137"/>
    </location>
</feature>
<feature type="disulfide bond" evidence="1">
    <location>
        <begin position="2224"/>
        <end position="2264"/>
    </location>
</feature>
<feature type="disulfide bond" evidence="1">
    <location>
        <begin position="2250"/>
        <end position="2279"/>
    </location>
</feature>
<feature type="disulfide bond" evidence="1">
    <location>
        <begin position="2283"/>
        <end position="2309"/>
    </location>
</feature>
<feature type="disulfide bond" evidence="1">
    <location>
        <begin position="2395"/>
        <end position="2437"/>
    </location>
</feature>
<feature type="disulfide bond" evidence="1">
    <location>
        <begin position="2423"/>
        <end position="2452"/>
    </location>
</feature>
<feature type="disulfide bond" evidence="1">
    <location>
        <begin position="2456"/>
        <end position="2484"/>
    </location>
</feature>
<feature type="disulfide bond" evidence="1">
    <location>
        <begin position="2569"/>
        <end position="2610"/>
    </location>
</feature>
<feature type="disulfide bond" evidence="1">
    <location>
        <begin position="2596"/>
        <end position="2627"/>
    </location>
</feature>
<feature type="disulfide bond" evidence="1">
    <location>
        <begin position="2632"/>
        <end position="2674"/>
    </location>
</feature>
<feature type="disulfide bond" evidence="1">
    <location>
        <begin position="2658"/>
        <end position="2689"/>
    </location>
</feature>
<feature type="disulfide bond" evidence="1">
    <location>
        <begin position="2694"/>
        <end position="2739"/>
    </location>
</feature>
<feature type="disulfide bond" evidence="1">
    <location>
        <begin position="2725"/>
        <end position="2754"/>
    </location>
</feature>
<feature type="disulfide bond" evidence="1">
    <location>
        <begin position="2759"/>
        <end position="2799"/>
    </location>
</feature>
<feature type="disulfide bond" evidence="1">
    <location>
        <begin position="2785"/>
        <end position="2812"/>
    </location>
</feature>
<feature type="disulfide bond" evidence="1">
    <location>
        <begin position="2817"/>
        <end position="2857"/>
    </location>
</feature>
<feature type="disulfide bond" evidence="1">
    <location>
        <begin position="2843"/>
        <end position="2870"/>
    </location>
</feature>
<feature type="disulfide bond" evidence="1">
    <location>
        <begin position="2875"/>
        <end position="2915"/>
    </location>
</feature>
<feature type="disulfide bond" evidence="1">
    <location>
        <begin position="2901"/>
        <end position="2928"/>
    </location>
</feature>
<feature type="disulfide bond" evidence="1">
    <location>
        <begin position="2933"/>
        <end position="2977"/>
    </location>
</feature>
<feature type="disulfide bond" evidence="1">
    <location>
        <begin position="2963"/>
        <end position="2990"/>
    </location>
</feature>
<feature type="disulfide bond" evidence="1">
    <location>
        <begin position="2995"/>
        <end position="3035"/>
    </location>
</feature>
<feature type="disulfide bond" evidence="1">
    <location>
        <begin position="3021"/>
        <end position="3048"/>
    </location>
</feature>
<feature type="disulfide bond" evidence="1">
    <location>
        <begin position="3056"/>
        <end position="3096"/>
    </location>
</feature>
<feature type="disulfide bond" evidence="1">
    <location>
        <begin position="3082"/>
        <end position="3109"/>
    </location>
</feature>
<feature type="disulfide bond" evidence="1">
    <location>
        <begin position="3114"/>
        <end position="3155"/>
    </location>
</feature>
<feature type="disulfide bond" evidence="1">
    <location>
        <begin position="3141"/>
        <end position="3168"/>
    </location>
</feature>
<feature type="disulfide bond" evidence="1">
    <location>
        <begin position="3173"/>
        <end position="3215"/>
    </location>
</feature>
<feature type="disulfide bond" evidence="1">
    <location>
        <begin position="3199"/>
        <end position="3228"/>
    </location>
</feature>
<feature type="disulfide bond" evidence="1">
    <location>
        <begin position="3233"/>
        <end position="3273"/>
    </location>
</feature>
<feature type="disulfide bond" evidence="1">
    <location>
        <begin position="3259"/>
        <end position="3286"/>
    </location>
</feature>
<feature type="disulfide bond" evidence="1">
    <location>
        <begin position="3291"/>
        <end position="3331"/>
    </location>
</feature>
<feature type="disulfide bond" evidence="1">
    <location>
        <begin position="3317"/>
        <end position="3344"/>
    </location>
</feature>
<feature type="disulfide bond" evidence="1">
    <location>
        <begin position="3352"/>
        <end position="3393"/>
    </location>
</feature>
<feature type="disulfide bond" evidence="1">
    <location>
        <begin position="3379"/>
        <end position="3406"/>
    </location>
</feature>
<feature type="disulfide bond" evidence="1">
    <location>
        <begin position="3411"/>
        <end position="3453"/>
    </location>
</feature>
<feature type="disulfide bond" evidence="1">
    <location>
        <begin position="3438"/>
        <end position="3466"/>
    </location>
</feature>
<feature type="splice variant" id="VSP_009053" description="In isoform 3." evidence="8">
    <location>
        <begin position="1"/>
        <end position="1061"/>
    </location>
</feature>
<feature type="splice variant" id="VSP_009054" description="In isoform 3." evidence="8">
    <original>TCD</original>
    <variation>MAK</variation>
    <location>
        <begin position="1062"/>
        <end position="1064"/>
    </location>
</feature>
<feature type="splice variant" id="VSP_009055" description="In isoform 3." evidence="8">
    <original>AECGASATNNEG</original>
    <variation>GTWSAAFICLYV</variation>
    <location>
        <begin position="1239"/>
        <end position="1250"/>
    </location>
</feature>
<feature type="splice variant" id="VSP_009056" description="In isoform 3." evidence="8">
    <location>
        <begin position="1251"/>
        <end position="3707"/>
    </location>
</feature>
<feature type="splice variant" id="VSP_027009" description="In isoform 2." evidence="7">
    <location>
        <begin position="1799"/>
        <end position="1868"/>
    </location>
</feature>
<feature type="sequence conflict" description="In Ref. 1; BAE24305." evidence="9" ref="1">
    <original>VKTCGSNLQGPSGTFTSPNFPFQYDSNAQCVWVI</original>
    <variation>GLSLSLSLSLCVCVCVCLCDCVLICVYLCSYSNF</variation>
    <location>
        <begin position="545"/>
        <end position="578"/>
    </location>
</feature>
<feature type="sequence conflict" description="In Ref. 1; BAB29924." evidence="9" ref="1">
    <original>E</original>
    <variation>G</variation>
    <location>
        <position position="1183"/>
    </location>
</feature>
<evidence type="ECO:0000250" key="1"/>
<evidence type="ECO:0000255" key="2"/>
<evidence type="ECO:0000255" key="3">
    <source>
        <dbReference type="PROSITE-ProRule" id="PRU00059"/>
    </source>
</evidence>
<evidence type="ECO:0000255" key="4">
    <source>
        <dbReference type="PROSITE-ProRule" id="PRU00302"/>
    </source>
</evidence>
<evidence type="ECO:0000256" key="5">
    <source>
        <dbReference type="SAM" id="MobiDB-lite"/>
    </source>
</evidence>
<evidence type="ECO:0000269" key="6">
    <source>
    </source>
</evidence>
<evidence type="ECO:0000303" key="7">
    <source>
    </source>
</evidence>
<evidence type="ECO:0000303" key="8">
    <source>
    </source>
</evidence>
<evidence type="ECO:0000305" key="9"/>
<keyword id="KW-0025">Alternative splicing</keyword>
<keyword id="KW-1003">Cell membrane</keyword>
<keyword id="KW-1015">Disulfide bond</keyword>
<keyword id="KW-0325">Glycoprotein</keyword>
<keyword id="KW-0472">Membrane</keyword>
<keyword id="KW-1185">Reference proteome</keyword>
<keyword id="KW-0677">Repeat</keyword>
<keyword id="KW-0768">Sushi</keyword>
<keyword id="KW-0812">Transmembrane</keyword>
<keyword id="KW-1133">Transmembrane helix</keyword>